<accession>Q8N4C9</accession>
<accession>Q8N8D2</accession>
<keyword id="KW-0025">Alternative splicing</keyword>
<keyword id="KW-0472">Membrane</keyword>
<keyword id="KW-1185">Reference proteome</keyword>
<keyword id="KW-0812">Transmembrane</keyword>
<keyword id="KW-1133">Transmembrane helix</keyword>
<organism>
    <name type="scientific">Homo sapiens</name>
    <name type="common">Human</name>
    <dbReference type="NCBI Taxonomy" id="9606"/>
    <lineage>
        <taxon>Eukaryota</taxon>
        <taxon>Metazoa</taxon>
        <taxon>Chordata</taxon>
        <taxon>Craniata</taxon>
        <taxon>Vertebrata</taxon>
        <taxon>Euteleostomi</taxon>
        <taxon>Mammalia</taxon>
        <taxon>Eutheria</taxon>
        <taxon>Euarchontoglires</taxon>
        <taxon>Primates</taxon>
        <taxon>Haplorrhini</taxon>
        <taxon>Catarrhini</taxon>
        <taxon>Hominidae</taxon>
        <taxon>Homo</taxon>
    </lineage>
</organism>
<gene>
    <name type="primary">C17orf78</name>
</gene>
<protein>
    <recommendedName>
        <fullName>Uncharacterized protein C17orf78</fullName>
    </recommendedName>
</protein>
<feature type="chain" id="PRO_0000300630" description="Uncharacterized protein C17orf78">
    <location>
        <begin position="1"/>
        <end position="275"/>
    </location>
</feature>
<feature type="transmembrane region" description="Helical" evidence="1">
    <location>
        <begin position="187"/>
        <end position="207"/>
    </location>
</feature>
<feature type="region of interest" description="Disordered" evidence="2">
    <location>
        <begin position="148"/>
        <end position="173"/>
    </location>
</feature>
<feature type="region of interest" description="Disordered" evidence="2">
    <location>
        <begin position="234"/>
        <end position="264"/>
    </location>
</feature>
<feature type="compositionally biased region" description="Polar residues" evidence="2">
    <location>
        <begin position="148"/>
        <end position="158"/>
    </location>
</feature>
<feature type="compositionally biased region" description="Polar residues" evidence="2">
    <location>
        <begin position="245"/>
        <end position="261"/>
    </location>
</feature>
<feature type="splice variant" id="VSP_027838" description="In isoform 2." evidence="4">
    <original>AFLPGISQCKVLGASSETFPTTAPSITPG</original>
    <variation>VSMPRSQEAVPMPVVVEMAKEGRPATWDS</variation>
    <location>
        <begin position="131"/>
        <end position="159"/>
    </location>
</feature>
<feature type="splice variant" id="VSP_027839" description="In isoform 2." evidence="4">
    <location>
        <begin position="160"/>
        <end position="275"/>
    </location>
</feature>
<feature type="sequence variant" id="VAR_034877" description="In dbSNP:rs1714987." evidence="3">
    <original>T</original>
    <variation>S</variation>
    <location>
        <position position="152"/>
    </location>
</feature>
<evidence type="ECO:0000255" key="1"/>
<evidence type="ECO:0000256" key="2">
    <source>
        <dbReference type="SAM" id="MobiDB-lite"/>
    </source>
</evidence>
<evidence type="ECO:0000269" key="3">
    <source>
    </source>
</evidence>
<evidence type="ECO:0000303" key="4">
    <source>
    </source>
</evidence>
<evidence type="ECO:0000305" key="5"/>
<comment type="subcellular location">
    <subcellularLocation>
        <location evidence="5">Membrane</location>
        <topology evidence="5">Single-pass membrane protein</topology>
    </subcellularLocation>
</comment>
<comment type="alternative products">
    <event type="alternative splicing"/>
    <isoform>
        <id>Q8N4C9-1</id>
        <name>1</name>
        <sequence type="displayed"/>
    </isoform>
    <isoform>
        <id>Q8N4C9-2</id>
        <name>2</name>
        <sequence type="described" ref="VSP_027838 VSP_027839"/>
    </isoform>
</comment>
<dbReference type="EMBL" id="AK096966">
    <property type="protein sequence ID" value="BAC04914.1"/>
    <property type="molecule type" value="mRNA"/>
</dbReference>
<dbReference type="EMBL" id="AC068400">
    <property type="status" value="NOT_ANNOTATED_CDS"/>
    <property type="molecule type" value="Genomic_DNA"/>
</dbReference>
<dbReference type="EMBL" id="BC034672">
    <property type="protein sequence ID" value="AAH34672.1"/>
    <property type="molecule type" value="mRNA"/>
</dbReference>
<dbReference type="CCDS" id="CCDS45655.1">
    <molecule id="Q8N4C9-1"/>
</dbReference>
<dbReference type="CCDS" id="CCDS82110.1">
    <molecule id="Q8N4C9-2"/>
</dbReference>
<dbReference type="RefSeq" id="NP_001308328.1">
    <molecule id="Q8N4C9-2"/>
    <property type="nucleotide sequence ID" value="NM_001321399.2"/>
</dbReference>
<dbReference type="RefSeq" id="NP_775896.3">
    <molecule id="Q8N4C9-1"/>
    <property type="nucleotide sequence ID" value="NM_173625.4"/>
</dbReference>
<dbReference type="BioGRID" id="129757">
    <property type="interactions" value="11"/>
</dbReference>
<dbReference type="IntAct" id="Q8N4C9">
    <property type="interactions" value="11"/>
</dbReference>
<dbReference type="STRING" id="9606.ENSP00000478886"/>
<dbReference type="iPTMnet" id="Q8N4C9"/>
<dbReference type="PhosphoSitePlus" id="Q8N4C9"/>
<dbReference type="BioMuta" id="C17orf78"/>
<dbReference type="DMDM" id="296434464"/>
<dbReference type="PaxDb" id="9606-ENSP00000478886"/>
<dbReference type="Antibodypedia" id="73298">
    <property type="antibodies" value="75 antibodies from 17 providers"/>
</dbReference>
<dbReference type="DNASU" id="284099"/>
<dbReference type="Ensembl" id="ENST00000611038.4">
    <molecule id="Q8N4C9-2"/>
    <property type="protein sequence ID" value="ENSP00000477816.1"/>
    <property type="gene ID" value="ENSG00000278505.5"/>
</dbReference>
<dbReference type="Ensembl" id="ENST00000615133.2">
    <molecule id="Q8N4C9-1"/>
    <property type="protein sequence ID" value="ENSP00000478886.1"/>
    <property type="gene ID" value="ENSG00000278505.5"/>
</dbReference>
<dbReference type="Ensembl" id="ENST00000616425.2">
    <molecule id="Q8N4C9-1"/>
    <property type="protein sequence ID" value="ENSP00000484072.1"/>
    <property type="gene ID" value="ENSG00000278145.2"/>
</dbReference>
<dbReference type="Ensembl" id="ENST00000631822.1">
    <molecule id="Q8N4C9-2"/>
    <property type="protein sequence ID" value="ENSP00000488505.1"/>
    <property type="gene ID" value="ENSG00000278145.2"/>
</dbReference>
<dbReference type="GeneID" id="284099"/>
<dbReference type="KEGG" id="hsa:284099"/>
<dbReference type="MANE-Select" id="ENST00000615133.2">
    <property type="protein sequence ID" value="ENSP00000478886.1"/>
    <property type="RefSeq nucleotide sequence ID" value="NM_173625.5"/>
    <property type="RefSeq protein sequence ID" value="NP_775896.3"/>
</dbReference>
<dbReference type="UCSC" id="uc002hns.3">
    <molecule id="Q8N4C9-1"/>
    <property type="organism name" value="human"/>
</dbReference>
<dbReference type="AGR" id="HGNC:26831"/>
<dbReference type="CTD" id="284099"/>
<dbReference type="GeneCards" id="C17orf78"/>
<dbReference type="HGNC" id="HGNC:26831">
    <property type="gene designation" value="C17orf78"/>
</dbReference>
<dbReference type="HPA" id="ENSG00000278505">
    <property type="expression patterns" value="Tissue enriched (intestine)"/>
</dbReference>
<dbReference type="neXtProt" id="NX_Q8N4C9"/>
<dbReference type="OpenTargets" id="ENSG00000278505"/>
<dbReference type="PharmGKB" id="PA143485402"/>
<dbReference type="VEuPathDB" id="HostDB:ENSG00000278505"/>
<dbReference type="eggNOG" id="ENOG502SUFK">
    <property type="taxonomic scope" value="Eukaryota"/>
</dbReference>
<dbReference type="GeneTree" id="ENSGT00390000008122"/>
<dbReference type="HOGENOM" id="CLU_1942914_0_0_1"/>
<dbReference type="InParanoid" id="Q8N4C9"/>
<dbReference type="OMA" id="FIIFEVP"/>
<dbReference type="OrthoDB" id="9118309at2759"/>
<dbReference type="PAN-GO" id="Q8N4C9">
    <property type="GO annotations" value="0 GO annotations based on evolutionary models"/>
</dbReference>
<dbReference type="PhylomeDB" id="Q8N4C9"/>
<dbReference type="TreeFam" id="TF337703"/>
<dbReference type="PathwayCommons" id="Q8N4C9"/>
<dbReference type="BioGRID-ORCS" id="284099">
    <property type="hits" value="11 hits in 1119 CRISPR screens"/>
</dbReference>
<dbReference type="GenomeRNAi" id="284099"/>
<dbReference type="Pharos" id="Q8N4C9">
    <property type="development level" value="Tdark"/>
</dbReference>
<dbReference type="PRO" id="PR:Q8N4C9"/>
<dbReference type="Proteomes" id="UP000005640">
    <property type="component" value="Chromosome 17"/>
</dbReference>
<dbReference type="RNAct" id="Q8N4C9">
    <property type="molecule type" value="protein"/>
</dbReference>
<dbReference type="Bgee" id="ENSG00000278505">
    <property type="expression patterns" value="Expressed in duodenum and 21 other cell types or tissues"/>
</dbReference>
<dbReference type="GO" id="GO:0016020">
    <property type="term" value="C:membrane"/>
    <property type="evidence" value="ECO:0007669"/>
    <property type="project" value="UniProtKB-SubCell"/>
</dbReference>
<dbReference type="InterPro" id="IPR031668">
    <property type="entry name" value="DUF4711"/>
</dbReference>
<dbReference type="PANTHER" id="PTHR36870">
    <property type="entry name" value="C17ORF78 ISOFORM 2"/>
    <property type="match status" value="1"/>
</dbReference>
<dbReference type="PANTHER" id="PTHR36870:SF1">
    <property type="entry name" value="CHROMOSOME 17 C17ORF78 HOMOLOG"/>
    <property type="match status" value="1"/>
</dbReference>
<dbReference type="Pfam" id="PF15829">
    <property type="entry name" value="DUF4711"/>
    <property type="match status" value="1"/>
</dbReference>
<reference key="1">
    <citation type="journal article" date="2004" name="Nat. Genet.">
        <title>Complete sequencing and characterization of 21,243 full-length human cDNAs.</title>
        <authorList>
            <person name="Ota T."/>
            <person name="Suzuki Y."/>
            <person name="Nishikawa T."/>
            <person name="Otsuki T."/>
            <person name="Sugiyama T."/>
            <person name="Irie R."/>
            <person name="Wakamatsu A."/>
            <person name="Hayashi K."/>
            <person name="Sato H."/>
            <person name="Nagai K."/>
            <person name="Kimura K."/>
            <person name="Makita H."/>
            <person name="Sekine M."/>
            <person name="Obayashi M."/>
            <person name="Nishi T."/>
            <person name="Shibahara T."/>
            <person name="Tanaka T."/>
            <person name="Ishii S."/>
            <person name="Yamamoto J."/>
            <person name="Saito K."/>
            <person name="Kawai Y."/>
            <person name="Isono Y."/>
            <person name="Nakamura Y."/>
            <person name="Nagahari K."/>
            <person name="Murakami K."/>
            <person name="Yasuda T."/>
            <person name="Iwayanagi T."/>
            <person name="Wagatsuma M."/>
            <person name="Shiratori A."/>
            <person name="Sudo H."/>
            <person name="Hosoiri T."/>
            <person name="Kaku Y."/>
            <person name="Kodaira H."/>
            <person name="Kondo H."/>
            <person name="Sugawara M."/>
            <person name="Takahashi M."/>
            <person name="Kanda K."/>
            <person name="Yokoi T."/>
            <person name="Furuya T."/>
            <person name="Kikkawa E."/>
            <person name="Omura Y."/>
            <person name="Abe K."/>
            <person name="Kamihara K."/>
            <person name="Katsuta N."/>
            <person name="Sato K."/>
            <person name="Tanikawa M."/>
            <person name="Yamazaki M."/>
            <person name="Ninomiya K."/>
            <person name="Ishibashi T."/>
            <person name="Yamashita H."/>
            <person name="Murakawa K."/>
            <person name="Fujimori K."/>
            <person name="Tanai H."/>
            <person name="Kimata M."/>
            <person name="Watanabe M."/>
            <person name="Hiraoka S."/>
            <person name="Chiba Y."/>
            <person name="Ishida S."/>
            <person name="Ono Y."/>
            <person name="Takiguchi S."/>
            <person name="Watanabe S."/>
            <person name="Yosida M."/>
            <person name="Hotuta T."/>
            <person name="Kusano J."/>
            <person name="Kanehori K."/>
            <person name="Takahashi-Fujii A."/>
            <person name="Hara H."/>
            <person name="Tanase T.-O."/>
            <person name="Nomura Y."/>
            <person name="Togiya S."/>
            <person name="Komai F."/>
            <person name="Hara R."/>
            <person name="Takeuchi K."/>
            <person name="Arita M."/>
            <person name="Imose N."/>
            <person name="Musashino K."/>
            <person name="Yuuki H."/>
            <person name="Oshima A."/>
            <person name="Sasaki N."/>
            <person name="Aotsuka S."/>
            <person name="Yoshikawa Y."/>
            <person name="Matsunawa H."/>
            <person name="Ichihara T."/>
            <person name="Shiohata N."/>
            <person name="Sano S."/>
            <person name="Moriya S."/>
            <person name="Momiyama H."/>
            <person name="Satoh N."/>
            <person name="Takami S."/>
            <person name="Terashima Y."/>
            <person name="Suzuki O."/>
            <person name="Nakagawa S."/>
            <person name="Senoh A."/>
            <person name="Mizoguchi H."/>
            <person name="Goto Y."/>
            <person name="Shimizu F."/>
            <person name="Wakebe H."/>
            <person name="Hishigaki H."/>
            <person name="Watanabe T."/>
            <person name="Sugiyama A."/>
            <person name="Takemoto M."/>
            <person name="Kawakami B."/>
            <person name="Yamazaki M."/>
            <person name="Watanabe K."/>
            <person name="Kumagai A."/>
            <person name="Itakura S."/>
            <person name="Fukuzumi Y."/>
            <person name="Fujimori Y."/>
            <person name="Komiyama M."/>
            <person name="Tashiro H."/>
            <person name="Tanigami A."/>
            <person name="Fujiwara T."/>
            <person name="Ono T."/>
            <person name="Yamada K."/>
            <person name="Fujii Y."/>
            <person name="Ozaki K."/>
            <person name="Hirao M."/>
            <person name="Ohmori Y."/>
            <person name="Kawabata A."/>
            <person name="Hikiji T."/>
            <person name="Kobatake N."/>
            <person name="Inagaki H."/>
            <person name="Ikema Y."/>
            <person name="Okamoto S."/>
            <person name="Okitani R."/>
            <person name="Kawakami T."/>
            <person name="Noguchi S."/>
            <person name="Itoh T."/>
            <person name="Shigeta K."/>
            <person name="Senba T."/>
            <person name="Matsumura K."/>
            <person name="Nakajima Y."/>
            <person name="Mizuno T."/>
            <person name="Morinaga M."/>
            <person name="Sasaki M."/>
            <person name="Togashi T."/>
            <person name="Oyama M."/>
            <person name="Hata H."/>
            <person name="Watanabe M."/>
            <person name="Komatsu T."/>
            <person name="Mizushima-Sugano J."/>
            <person name="Satoh T."/>
            <person name="Shirai Y."/>
            <person name="Takahashi Y."/>
            <person name="Nakagawa K."/>
            <person name="Okumura K."/>
            <person name="Nagase T."/>
            <person name="Nomura N."/>
            <person name="Kikuchi H."/>
            <person name="Masuho Y."/>
            <person name="Yamashita R."/>
            <person name="Nakai K."/>
            <person name="Yada T."/>
            <person name="Nakamura Y."/>
            <person name="Ohara O."/>
            <person name="Isogai T."/>
            <person name="Sugano S."/>
        </authorList>
    </citation>
    <scope>NUCLEOTIDE SEQUENCE [LARGE SCALE MRNA] (ISOFORM 2)</scope>
    <source>
        <tissue>Small intestine</tissue>
    </source>
</reference>
<reference key="2">
    <citation type="journal article" date="2006" name="Nature">
        <title>DNA sequence of human chromosome 17 and analysis of rearrangement in the human lineage.</title>
        <authorList>
            <person name="Zody M.C."/>
            <person name="Garber M."/>
            <person name="Adams D.J."/>
            <person name="Sharpe T."/>
            <person name="Harrow J."/>
            <person name="Lupski J.R."/>
            <person name="Nicholson C."/>
            <person name="Searle S.M."/>
            <person name="Wilming L."/>
            <person name="Young S.K."/>
            <person name="Abouelleil A."/>
            <person name="Allen N.R."/>
            <person name="Bi W."/>
            <person name="Bloom T."/>
            <person name="Borowsky M.L."/>
            <person name="Bugalter B.E."/>
            <person name="Butler J."/>
            <person name="Chang J.L."/>
            <person name="Chen C.-K."/>
            <person name="Cook A."/>
            <person name="Corum B."/>
            <person name="Cuomo C.A."/>
            <person name="de Jong P.J."/>
            <person name="DeCaprio D."/>
            <person name="Dewar K."/>
            <person name="FitzGerald M."/>
            <person name="Gilbert J."/>
            <person name="Gibson R."/>
            <person name="Gnerre S."/>
            <person name="Goldstein S."/>
            <person name="Grafham D.V."/>
            <person name="Grocock R."/>
            <person name="Hafez N."/>
            <person name="Hagopian D.S."/>
            <person name="Hart E."/>
            <person name="Norman C.H."/>
            <person name="Humphray S."/>
            <person name="Jaffe D.B."/>
            <person name="Jones M."/>
            <person name="Kamal M."/>
            <person name="Khodiyar V.K."/>
            <person name="LaButti K."/>
            <person name="Laird G."/>
            <person name="Lehoczky J."/>
            <person name="Liu X."/>
            <person name="Lokyitsang T."/>
            <person name="Loveland J."/>
            <person name="Lui A."/>
            <person name="Macdonald P."/>
            <person name="Major J.E."/>
            <person name="Matthews L."/>
            <person name="Mauceli E."/>
            <person name="McCarroll S.A."/>
            <person name="Mihalev A.H."/>
            <person name="Mudge J."/>
            <person name="Nguyen C."/>
            <person name="Nicol R."/>
            <person name="O'Leary S.B."/>
            <person name="Osoegawa K."/>
            <person name="Schwartz D.C."/>
            <person name="Shaw-Smith C."/>
            <person name="Stankiewicz P."/>
            <person name="Steward C."/>
            <person name="Swarbreck D."/>
            <person name="Venkataraman V."/>
            <person name="Whittaker C.A."/>
            <person name="Yang X."/>
            <person name="Zimmer A.R."/>
            <person name="Bradley A."/>
            <person name="Hubbard T."/>
            <person name="Birren B.W."/>
            <person name="Rogers J."/>
            <person name="Lander E.S."/>
            <person name="Nusbaum C."/>
        </authorList>
    </citation>
    <scope>NUCLEOTIDE SEQUENCE [LARGE SCALE GENOMIC DNA]</scope>
</reference>
<reference key="3">
    <citation type="journal article" date="2004" name="Genome Res.">
        <title>The status, quality, and expansion of the NIH full-length cDNA project: the Mammalian Gene Collection (MGC).</title>
        <authorList>
            <consortium name="The MGC Project Team"/>
        </authorList>
    </citation>
    <scope>NUCLEOTIDE SEQUENCE [LARGE SCALE MRNA] (ISOFORM 1)</scope>
    <scope>VARIANT SER-152</scope>
    <source>
        <tissue>Colon</tissue>
    </source>
</reference>
<name>CQ078_HUMAN</name>
<sequence length="275" mass="30555">MDTILVFSLIIASYDANKKDLRDSSCRLEQLPGIFPKDVRSIRELQMQETHTETKRTTFIQNRTIATLQCLGSDSKVKVNLVYLERRPKVKHILKNLRIIAAPRRNSSASSSCHLIPTSKFQTGSLLKGKAFLPGISQCKVLGASSETFPTTAPSITPGNKEGEKTTSTDTDENLEKRQKWSIVVKILIAVTLLLSGVAIIVFVIFEVPCPYQCLGARKLCQCQWLWRWQKKGGQPPGTAESKPDSQPQKVGQDAANSSNPKKAAEITVIHQTYF</sequence>
<proteinExistence type="evidence at transcript level"/>